<sequence>MQPSEMVMNPKQVFLSVLIFGVAGLLLFMYLQVWIEEQHTGRVEKRREQKVTSGWGPVKYLRPVPRIMSTEKIQEHITNQNPKFHMPEDVREKKENLLLNSERSTRLLTKTSHSQGGDQALSKSTGSPTEKLIEKRQGAKTVFNKFSNMNWPVDIHPLNKSLVKDNKWKKTEETQEKRRSFLQEFCKKYGGVSHHQSHLFHTVSRIYVEDKHKILYCEVPKAGCSNWKRILMVLNGLASSAYNISHNAVHYGKHLKKLDSFDLKGIYTRLNTYTKAVFVRDPMERLVSAFRDKFEHPNSYYHPVFGKAIIKKYRPNACEEALINGSGVKFKEFIHYLLDSHRPVGMDIHWEKVSKLCYPCLINYDFVGKFETLEEDANYFLQMIGAPKELKFPNFKDRHSSDERTNAQVVRQYLKDLTRTERQLIYDFYYLDYLMFNYTTPFL</sequence>
<organism>
    <name type="scientific">Homo sapiens</name>
    <name type="common">Human</name>
    <dbReference type="NCBI Taxonomy" id="9606"/>
    <lineage>
        <taxon>Eukaryota</taxon>
        <taxon>Metazoa</taxon>
        <taxon>Chordata</taxon>
        <taxon>Craniata</taxon>
        <taxon>Vertebrata</taxon>
        <taxon>Euteleostomi</taxon>
        <taxon>Mammalia</taxon>
        <taxon>Eutheria</taxon>
        <taxon>Euarchontoglires</taxon>
        <taxon>Primates</taxon>
        <taxon>Haplorrhini</taxon>
        <taxon>Catarrhini</taxon>
        <taxon>Hominidae</taxon>
        <taxon>Homo</taxon>
    </lineage>
</organism>
<comment type="function">
    <text>Catalyzes the transfer of sulfate to position 4 of non-reducing N-acetylgalactosamine (GalNAc) residues in both N-glycans and O-glycans. Participates in biosynthesis of glycoprotein hormones lutropin and thyrotropin, by mediating sulfation of their carbohydrate structures. Has a higher activity toward carbonic anhydrase VI than toward lutropin. Only active against terminal GalNAcbeta1,GalNAcbeta. Isoform 2, but not isoform 1, is active toward chondroitin.</text>
</comment>
<comment type="subcellular location">
    <molecule>Isoform 1</molecule>
    <subcellularLocation>
        <location evidence="1">Golgi apparatus membrane</location>
        <topology evidence="1">Single-pass type II membrane protein</topology>
    </subcellularLocation>
</comment>
<comment type="subcellular location">
    <molecule>Isoform 2</molecule>
    <subcellularLocation>
        <location evidence="8">Secreted</location>
    </subcellularLocation>
</comment>
<comment type="alternative products">
    <event type="alternative splicing"/>
    <isoform>
        <id>Q7L1S5-1</id>
        <name>1</name>
        <sequence type="displayed"/>
    </isoform>
    <isoform>
        <id>Q7L1S5-2</id>
        <name>2</name>
        <sequence type="described" ref="VSP_043865 VSP_043866"/>
    </isoform>
</comment>
<comment type="tissue specificity">
    <text evidence="4 5">Highly expressed in trachea. Also expressed in fetal lung, adult pancreas, testis and salivary gland. Expressed at low level in pituitary gland, apex of the heart, adult lung, prostate and mammary gland. Weakly or not expressed in heart, liver and spinal cord.</text>
</comment>
<comment type="similarity">
    <text evidence="8">Belongs to the sulfotransferase 2 family.</text>
</comment>
<comment type="caution">
    <text evidence="8">It is uncertain whether Met-1 or Met-8 is the initiator.</text>
</comment>
<comment type="sequence caution" evidence="8">
    <conflict type="erroneous initiation">
        <sequence resource="EMBL-CDS" id="AAH25764"/>
    </conflict>
    <text>Truncated N-terminus.</text>
</comment>
<comment type="sequence caution" evidence="8">
    <conflict type="erroneous initiation">
        <sequence resource="EMBL-CDS" id="AAK01862"/>
    </conflict>
    <text>Truncated N-terminus.</text>
</comment>
<comment type="sequence caution" evidence="8">
    <conflict type="erroneous translation">
        <sequence resource="EMBL-CDS" id="AAK30370"/>
    </conflict>
    <text>Wrong choice of CDS.</text>
</comment>
<evidence type="ECO:0000250" key="1"/>
<evidence type="ECO:0000255" key="2"/>
<evidence type="ECO:0000256" key="3">
    <source>
        <dbReference type="SAM" id="MobiDB-lite"/>
    </source>
</evidence>
<evidence type="ECO:0000269" key="4">
    <source>
    </source>
</evidence>
<evidence type="ECO:0000269" key="5">
    <source>
    </source>
</evidence>
<evidence type="ECO:0000269" key="6">
    <source>
    </source>
</evidence>
<evidence type="ECO:0000303" key="7">
    <source>
    </source>
</evidence>
<evidence type="ECO:0000305" key="8"/>
<proteinExistence type="evidence at protein level"/>
<keyword id="KW-0025">Alternative splicing</keyword>
<keyword id="KW-0119">Carbohydrate metabolism</keyword>
<keyword id="KW-0325">Glycoprotein</keyword>
<keyword id="KW-0333">Golgi apparatus</keyword>
<keyword id="KW-0472">Membrane</keyword>
<keyword id="KW-1267">Proteomics identification</keyword>
<keyword id="KW-1185">Reference proteome</keyword>
<keyword id="KW-0964">Secreted</keyword>
<keyword id="KW-0735">Signal-anchor</keyword>
<keyword id="KW-0808">Transferase</keyword>
<keyword id="KW-0812">Transmembrane</keyword>
<keyword id="KW-1133">Transmembrane helix</keyword>
<feature type="chain" id="PRO_0000189655" description="Carbohydrate sulfotransferase 9">
    <location>
        <begin position="1"/>
        <end position="443"/>
    </location>
</feature>
<feature type="topological domain" description="Cytoplasmic" evidence="2">
    <location>
        <begin position="1"/>
        <end position="12"/>
    </location>
</feature>
<feature type="transmembrane region" description="Helical; Signal-anchor for type II membrane protein" evidence="2">
    <location>
        <begin position="13"/>
        <end position="33"/>
    </location>
</feature>
<feature type="topological domain" description="Lumenal" evidence="2">
    <location>
        <begin position="34"/>
        <end position="443"/>
    </location>
</feature>
<feature type="region of interest" description="Disordered" evidence="3">
    <location>
        <begin position="108"/>
        <end position="132"/>
    </location>
</feature>
<feature type="compositionally biased region" description="Polar residues" evidence="3">
    <location>
        <begin position="108"/>
        <end position="128"/>
    </location>
</feature>
<feature type="binding site" evidence="1">
    <location>
        <begin position="220"/>
        <end position="226"/>
    </location>
    <ligand>
        <name>3'-phosphoadenylyl sulfate</name>
        <dbReference type="ChEBI" id="CHEBI:58339"/>
    </ligand>
</feature>
<feature type="binding site" evidence="1">
    <location>
        <begin position="280"/>
        <end position="288"/>
    </location>
    <ligand>
        <name>3'-phosphoadenylyl sulfate</name>
        <dbReference type="ChEBI" id="CHEBI:58339"/>
    </ligand>
</feature>
<feature type="glycosylation site" description="N-linked (GlcNAc...) asparagine" evidence="2">
    <location>
        <position position="159"/>
    </location>
</feature>
<feature type="glycosylation site" description="N-linked (GlcNAc...) asparagine" evidence="2">
    <location>
        <position position="243"/>
    </location>
</feature>
<feature type="glycosylation site" description="N-linked (GlcNAc...) asparagine" evidence="2">
    <location>
        <position position="324"/>
    </location>
</feature>
<feature type="glycosylation site" description="N-linked (GlcNAc...) asparagine" evidence="2">
    <location>
        <position position="437"/>
    </location>
</feature>
<feature type="splice variant" id="VSP_043865" description="In isoform 2." evidence="7">
    <original>MSTEKIQ</original>
    <variation>KPQVSHA</variation>
    <location>
        <begin position="68"/>
        <end position="74"/>
    </location>
</feature>
<feature type="splice variant" id="VSP_043866" description="In isoform 2." evidence="7">
    <location>
        <begin position="75"/>
        <end position="443"/>
    </location>
</feature>
<feature type="sequence variant" id="VAR_055150" description="In dbSNP:rs17694469.">
    <original>S</original>
    <variation>N</variation>
    <location>
        <position position="122"/>
    </location>
</feature>
<feature type="sequence variant" id="VAR_079095" description="In dbSNP:rs758130927." evidence="6">
    <original>N</original>
    <variation>S</variation>
    <location>
        <position position="378"/>
    </location>
</feature>
<feature type="sequence conflict" description="In Ref. 1; AAK01862." evidence="8" ref="1">
    <original>R</original>
    <variation>H</variation>
    <location>
        <position position="136"/>
    </location>
</feature>
<feature type="sequence conflict" description="In Ref. 1; AAK01862." evidence="8" ref="1">
    <original>N</original>
    <variation>D</variation>
    <location>
        <position position="150"/>
    </location>
</feature>
<feature type="sequence conflict" description="In Ref. 2; AAK30370." evidence="8" ref="2">
    <original>HH</original>
    <variation>PP</variation>
    <location>
        <begin position="194"/>
        <end position="195"/>
    </location>
</feature>
<feature type="sequence conflict" description="In Ref. 3; AAQ88852." evidence="8" ref="3">
    <original>F</original>
    <variation>L</variation>
    <location>
        <position position="442"/>
    </location>
</feature>
<protein>
    <recommendedName>
        <fullName>Carbohydrate sulfotransferase 9</fullName>
        <ecNumber>2.8.2.-</ecNumber>
    </recommendedName>
    <alternativeName>
        <fullName>GalNAc-4-O-sulfotransferase 2</fullName>
        <shortName>GalNAc-4-ST2</shortName>
        <shortName>GalNAc4ST-2</shortName>
    </alternativeName>
    <alternativeName>
        <fullName>N-acetylgalactosamine-4-O-sulfotransferase 2</fullName>
    </alternativeName>
</protein>
<name>CHST9_HUMAN</name>
<gene>
    <name type="primary">CHST9</name>
    <name type="ORF">UNQ2549/PRO6175</name>
</gene>
<dbReference type="EC" id="2.8.2.-"/>
<dbReference type="EMBL" id="AF239821">
    <property type="protein sequence ID" value="AAK01862.1"/>
    <property type="status" value="ALT_INIT"/>
    <property type="molecule type" value="mRNA"/>
</dbReference>
<dbReference type="EMBL" id="AF332472">
    <property type="protein sequence ID" value="AAK30369.1"/>
    <property type="molecule type" value="mRNA"/>
</dbReference>
<dbReference type="EMBL" id="AF332473">
    <property type="protein sequence ID" value="AAK30370.1"/>
    <property type="status" value="ALT_SEQ"/>
    <property type="molecule type" value="mRNA"/>
</dbReference>
<dbReference type="EMBL" id="AY358488">
    <property type="protein sequence ID" value="AAQ88852.1"/>
    <property type="molecule type" value="mRNA"/>
</dbReference>
<dbReference type="EMBL" id="AK093349">
    <property type="protein sequence ID" value="BAC04141.1"/>
    <property type="molecule type" value="mRNA"/>
</dbReference>
<dbReference type="EMBL" id="AC010854">
    <property type="status" value="NOT_ANNOTATED_CDS"/>
    <property type="molecule type" value="Genomic_DNA"/>
</dbReference>
<dbReference type="EMBL" id="AC023575">
    <property type="status" value="NOT_ANNOTATED_CDS"/>
    <property type="molecule type" value="Genomic_DNA"/>
</dbReference>
<dbReference type="EMBL" id="AC116017">
    <property type="status" value="NOT_ANNOTATED_CDS"/>
    <property type="molecule type" value="Genomic_DNA"/>
</dbReference>
<dbReference type="EMBL" id="BC025764">
    <property type="protein sequence ID" value="AAH25764.2"/>
    <property type="status" value="ALT_INIT"/>
    <property type="molecule type" value="mRNA"/>
</dbReference>
<dbReference type="CCDS" id="CCDS42422.1">
    <molecule id="Q7L1S5-1"/>
</dbReference>
<dbReference type="CCDS" id="CCDS58618.1">
    <molecule id="Q7L1S5-2"/>
</dbReference>
<dbReference type="RefSeq" id="NP_001243245.1">
    <molecule id="Q7L1S5-2"/>
    <property type="nucleotide sequence ID" value="NM_001256316.2"/>
</dbReference>
<dbReference type="RefSeq" id="NP_001385422.1">
    <molecule id="Q7L1S5-1"/>
    <property type="nucleotide sequence ID" value="NM_001398493.1"/>
</dbReference>
<dbReference type="RefSeq" id="NP_113610.2">
    <molecule id="Q7L1S5-1"/>
    <property type="nucleotide sequence ID" value="NM_031422.6"/>
</dbReference>
<dbReference type="RefSeq" id="XP_016881522.1">
    <property type="nucleotide sequence ID" value="XM_017026033.1"/>
</dbReference>
<dbReference type="BioGRID" id="123672">
    <property type="interactions" value="10"/>
</dbReference>
<dbReference type="FunCoup" id="Q7L1S5">
    <property type="interactions" value="87"/>
</dbReference>
<dbReference type="IntAct" id="Q7L1S5">
    <property type="interactions" value="7"/>
</dbReference>
<dbReference type="STRING" id="9606.ENSP00000480991"/>
<dbReference type="GlyCosmos" id="Q7L1S5">
    <property type="glycosylation" value="4 sites, No reported glycans"/>
</dbReference>
<dbReference type="GlyGen" id="Q7L1S5">
    <property type="glycosylation" value="6 sites, 4 N-linked glycans (1 site), 1 O-linked glycan (2 sites)"/>
</dbReference>
<dbReference type="iPTMnet" id="Q7L1S5"/>
<dbReference type="PhosphoSitePlus" id="Q7L1S5"/>
<dbReference type="BioMuta" id="CHST9"/>
<dbReference type="DMDM" id="229462829"/>
<dbReference type="jPOST" id="Q7L1S5"/>
<dbReference type="MassIVE" id="Q7L1S5"/>
<dbReference type="PaxDb" id="9606-ENSP00000480991"/>
<dbReference type="PeptideAtlas" id="Q7L1S5"/>
<dbReference type="ProteomicsDB" id="68748">
    <molecule id="Q7L1S5-1"/>
</dbReference>
<dbReference type="Antibodypedia" id="2549">
    <property type="antibodies" value="134 antibodies from 23 providers"/>
</dbReference>
<dbReference type="DNASU" id="83539"/>
<dbReference type="Ensembl" id="ENST00000580774.2">
    <molecule id="Q7L1S5-2"/>
    <property type="protein sequence ID" value="ENSP00000464655.1"/>
    <property type="gene ID" value="ENSG00000154080.14"/>
</dbReference>
<dbReference type="Ensembl" id="ENST00000581714.5">
    <molecule id="Q7L1S5-1"/>
    <property type="protein sequence ID" value="ENSP00000462852.1"/>
    <property type="gene ID" value="ENSG00000154080.14"/>
</dbReference>
<dbReference type="Ensembl" id="ENST00000618847.5">
    <molecule id="Q7L1S5-1"/>
    <property type="protein sequence ID" value="ENSP00000480991.1"/>
    <property type="gene ID" value="ENSG00000154080.14"/>
</dbReference>
<dbReference type="GeneID" id="83539"/>
<dbReference type="KEGG" id="hsa:83539"/>
<dbReference type="MANE-Select" id="ENST00000618847.5">
    <property type="protein sequence ID" value="ENSP00000480991.1"/>
    <property type="RefSeq nucleotide sequence ID" value="NM_031422.6"/>
    <property type="RefSeq protein sequence ID" value="NP_113610.2"/>
</dbReference>
<dbReference type="UCSC" id="uc002kwd.5">
    <molecule id="Q7L1S5-1"/>
    <property type="organism name" value="human"/>
</dbReference>
<dbReference type="AGR" id="HGNC:19898"/>
<dbReference type="CTD" id="83539"/>
<dbReference type="DisGeNET" id="83539"/>
<dbReference type="GeneCards" id="CHST9"/>
<dbReference type="HGNC" id="HGNC:19898">
    <property type="gene designation" value="CHST9"/>
</dbReference>
<dbReference type="HPA" id="ENSG00000154080">
    <property type="expression patterns" value="Tissue enhanced (salivary)"/>
</dbReference>
<dbReference type="MIM" id="610191">
    <property type="type" value="gene"/>
</dbReference>
<dbReference type="neXtProt" id="NX_Q7L1S5"/>
<dbReference type="OpenTargets" id="ENSG00000154080"/>
<dbReference type="PharmGKB" id="PA134888782"/>
<dbReference type="VEuPathDB" id="HostDB:ENSG00000154080"/>
<dbReference type="eggNOG" id="KOG4651">
    <property type="taxonomic scope" value="Eukaryota"/>
</dbReference>
<dbReference type="GeneTree" id="ENSGT00940000160563"/>
<dbReference type="HOGENOM" id="CLU_2687119_0_0_1"/>
<dbReference type="InParanoid" id="Q7L1S5"/>
<dbReference type="OMA" id="IHWEQIS"/>
<dbReference type="OrthoDB" id="2019940at2759"/>
<dbReference type="PAN-GO" id="Q7L1S5">
    <property type="GO annotations" value="2 GO annotations based on evolutionary models"/>
</dbReference>
<dbReference type="PhylomeDB" id="Q7L1S5"/>
<dbReference type="TreeFam" id="TF325581"/>
<dbReference type="PathwayCommons" id="Q7L1S5"/>
<dbReference type="Reactome" id="R-HSA-2022870">
    <molecule id="Q7L1S5-2"/>
    <property type="pathway name" value="Chondroitin sulfate biosynthesis"/>
</dbReference>
<dbReference type="SignaLink" id="Q7L1S5"/>
<dbReference type="BioGRID-ORCS" id="83539">
    <property type="hits" value="7 hits in 1137 CRISPR screens"/>
</dbReference>
<dbReference type="ChiTaRS" id="CHST9">
    <property type="organism name" value="human"/>
</dbReference>
<dbReference type="GenomeRNAi" id="83539"/>
<dbReference type="Pharos" id="Q7L1S5">
    <property type="development level" value="Tbio"/>
</dbReference>
<dbReference type="PRO" id="PR:Q7L1S5"/>
<dbReference type="Proteomes" id="UP000005640">
    <property type="component" value="Chromosome 18"/>
</dbReference>
<dbReference type="RNAct" id="Q7L1S5">
    <property type="molecule type" value="protein"/>
</dbReference>
<dbReference type="Bgee" id="ENSG00000154080">
    <property type="expression patterns" value="Expressed in bronchial epithelial cell and 102 other cell types or tissues"/>
</dbReference>
<dbReference type="ExpressionAtlas" id="Q7L1S5">
    <property type="expression patterns" value="baseline and differential"/>
</dbReference>
<dbReference type="GO" id="GO:0005576">
    <property type="term" value="C:extracellular region"/>
    <property type="evidence" value="ECO:0007669"/>
    <property type="project" value="UniProtKB-SubCell"/>
</dbReference>
<dbReference type="GO" id="GO:0000139">
    <property type="term" value="C:Golgi membrane"/>
    <property type="evidence" value="ECO:0000304"/>
    <property type="project" value="Reactome"/>
</dbReference>
<dbReference type="GO" id="GO:0016020">
    <property type="term" value="C:membrane"/>
    <property type="evidence" value="ECO:0000303"/>
    <property type="project" value="UniProtKB"/>
</dbReference>
<dbReference type="GO" id="GO:0047756">
    <property type="term" value="F:chondroitin 4-sulfotransferase activity"/>
    <property type="evidence" value="ECO:0000304"/>
    <property type="project" value="Reactome"/>
</dbReference>
<dbReference type="GO" id="GO:0001537">
    <property type="term" value="F:dermatan 4-sulfotransferase activity"/>
    <property type="evidence" value="ECO:0000314"/>
    <property type="project" value="UniProtKB"/>
</dbReference>
<dbReference type="GO" id="GO:0008146">
    <property type="term" value="F:sulfotransferase activity"/>
    <property type="evidence" value="ECO:0000318"/>
    <property type="project" value="GO_Central"/>
</dbReference>
<dbReference type="GO" id="GO:0016051">
    <property type="term" value="P:carbohydrate biosynthetic process"/>
    <property type="evidence" value="ECO:0007669"/>
    <property type="project" value="InterPro"/>
</dbReference>
<dbReference type="GO" id="GO:0030203">
    <property type="term" value="P:glycosaminoglycan metabolic process"/>
    <property type="evidence" value="ECO:0000303"/>
    <property type="project" value="UniProtKB"/>
</dbReference>
<dbReference type="GO" id="GO:0042446">
    <property type="term" value="P:hormone biosynthetic process"/>
    <property type="evidence" value="ECO:0000250"/>
    <property type="project" value="UniProtKB"/>
</dbReference>
<dbReference type="GO" id="GO:0030166">
    <property type="term" value="P:proteoglycan biosynthetic process"/>
    <property type="evidence" value="ECO:0000250"/>
    <property type="project" value="UniProtKB"/>
</dbReference>
<dbReference type="GO" id="GO:0006790">
    <property type="term" value="P:sulfur compound metabolic process"/>
    <property type="evidence" value="ECO:0000314"/>
    <property type="project" value="UniProtKB"/>
</dbReference>
<dbReference type="InterPro" id="IPR018011">
    <property type="entry name" value="Carb_sulfotrans_8-10"/>
</dbReference>
<dbReference type="InterPro" id="IPR005331">
    <property type="entry name" value="Sulfotransferase"/>
</dbReference>
<dbReference type="PANTHER" id="PTHR12137">
    <property type="entry name" value="CARBOHYDRATE SULFOTRANSFERASE"/>
    <property type="match status" value="1"/>
</dbReference>
<dbReference type="PANTHER" id="PTHR12137:SF6">
    <property type="entry name" value="CARBOHYDRATE SULFOTRANSFERASE 9"/>
    <property type="match status" value="1"/>
</dbReference>
<dbReference type="Pfam" id="PF03567">
    <property type="entry name" value="Sulfotransfer_2"/>
    <property type="match status" value="1"/>
</dbReference>
<reference key="1">
    <citation type="journal article" date="2001" name="Glycobiology">
        <title>Molecular cloning and expression of two distinct human N-acetylgalactosamine 4-O-sulfotransferases that transfer sulfate to GalNAc beta 1-&gt;4GlcNAc beta 1-&gt;R in both N- and O-glycans.</title>
        <authorList>
            <person name="Hiraoka N."/>
            <person name="Misra A."/>
            <person name="Belot F."/>
            <person name="Hindsgaul O."/>
            <person name="Fukuda M."/>
        </authorList>
    </citation>
    <scope>NUCLEOTIDE SEQUENCE [MRNA] (ISOFORM 1)</scope>
    <scope>ENZYME ACTIVITY</scope>
    <scope>TISSUE SPECIFICITY</scope>
</reference>
<reference key="2">
    <citation type="journal article" date="2001" name="J. Biol. Chem.">
        <title>Molecular cloning and expression of an N-acetylgalactosamine-4-O-sulfotransferase that transfers sulfate to terminal and non-terminal beta 1,4-linked N-acetylgalactosamine.</title>
        <authorList>
            <person name="Kang H.-G."/>
            <person name="Evers M.R."/>
            <person name="Xia G."/>
            <person name="Baenziger J.U."/>
            <person name="Schachner M."/>
        </authorList>
    </citation>
    <scope>NUCLEOTIDE SEQUENCE [MRNA] (ISOFORMS 1 AND 2)</scope>
    <scope>ENZYME ACTIVITY</scope>
    <scope>TISSUE SPECIFICITY</scope>
</reference>
<reference key="3">
    <citation type="journal article" date="2003" name="Genome Res.">
        <title>The secreted protein discovery initiative (SPDI), a large-scale effort to identify novel human secreted and transmembrane proteins: a bioinformatics assessment.</title>
        <authorList>
            <person name="Clark H.F."/>
            <person name="Gurney A.L."/>
            <person name="Abaya E."/>
            <person name="Baker K."/>
            <person name="Baldwin D.T."/>
            <person name="Brush J."/>
            <person name="Chen J."/>
            <person name="Chow B."/>
            <person name="Chui C."/>
            <person name="Crowley C."/>
            <person name="Currell B."/>
            <person name="Deuel B."/>
            <person name="Dowd P."/>
            <person name="Eaton D."/>
            <person name="Foster J.S."/>
            <person name="Grimaldi C."/>
            <person name="Gu Q."/>
            <person name="Hass P.E."/>
            <person name="Heldens S."/>
            <person name="Huang A."/>
            <person name="Kim H.S."/>
            <person name="Klimowski L."/>
            <person name="Jin Y."/>
            <person name="Johnson S."/>
            <person name="Lee J."/>
            <person name="Lewis L."/>
            <person name="Liao D."/>
            <person name="Mark M.R."/>
            <person name="Robbie E."/>
            <person name="Sanchez C."/>
            <person name="Schoenfeld J."/>
            <person name="Seshagiri S."/>
            <person name="Simmons L."/>
            <person name="Singh J."/>
            <person name="Smith V."/>
            <person name="Stinson J."/>
            <person name="Vagts A."/>
            <person name="Vandlen R.L."/>
            <person name="Watanabe C."/>
            <person name="Wieand D."/>
            <person name="Woods K."/>
            <person name="Xie M.-H."/>
            <person name="Yansura D.G."/>
            <person name="Yi S."/>
            <person name="Yu G."/>
            <person name="Yuan J."/>
            <person name="Zhang M."/>
            <person name="Zhang Z."/>
            <person name="Goddard A.D."/>
            <person name="Wood W.I."/>
            <person name="Godowski P.J."/>
            <person name="Gray A.M."/>
        </authorList>
    </citation>
    <scope>NUCLEOTIDE SEQUENCE [LARGE SCALE MRNA] (ISOFORM 1)</scope>
</reference>
<reference key="4">
    <citation type="journal article" date="2004" name="Nat. Genet.">
        <title>Complete sequencing and characterization of 21,243 full-length human cDNAs.</title>
        <authorList>
            <person name="Ota T."/>
            <person name="Suzuki Y."/>
            <person name="Nishikawa T."/>
            <person name="Otsuki T."/>
            <person name="Sugiyama T."/>
            <person name="Irie R."/>
            <person name="Wakamatsu A."/>
            <person name="Hayashi K."/>
            <person name="Sato H."/>
            <person name="Nagai K."/>
            <person name="Kimura K."/>
            <person name="Makita H."/>
            <person name="Sekine M."/>
            <person name="Obayashi M."/>
            <person name="Nishi T."/>
            <person name="Shibahara T."/>
            <person name="Tanaka T."/>
            <person name="Ishii S."/>
            <person name="Yamamoto J."/>
            <person name="Saito K."/>
            <person name="Kawai Y."/>
            <person name="Isono Y."/>
            <person name="Nakamura Y."/>
            <person name="Nagahari K."/>
            <person name="Murakami K."/>
            <person name="Yasuda T."/>
            <person name="Iwayanagi T."/>
            <person name="Wagatsuma M."/>
            <person name="Shiratori A."/>
            <person name="Sudo H."/>
            <person name="Hosoiri T."/>
            <person name="Kaku Y."/>
            <person name="Kodaira H."/>
            <person name="Kondo H."/>
            <person name="Sugawara M."/>
            <person name="Takahashi M."/>
            <person name="Kanda K."/>
            <person name="Yokoi T."/>
            <person name="Furuya T."/>
            <person name="Kikkawa E."/>
            <person name="Omura Y."/>
            <person name="Abe K."/>
            <person name="Kamihara K."/>
            <person name="Katsuta N."/>
            <person name="Sato K."/>
            <person name="Tanikawa M."/>
            <person name="Yamazaki M."/>
            <person name="Ninomiya K."/>
            <person name="Ishibashi T."/>
            <person name="Yamashita H."/>
            <person name="Murakawa K."/>
            <person name="Fujimori K."/>
            <person name="Tanai H."/>
            <person name="Kimata M."/>
            <person name="Watanabe M."/>
            <person name="Hiraoka S."/>
            <person name="Chiba Y."/>
            <person name="Ishida S."/>
            <person name="Ono Y."/>
            <person name="Takiguchi S."/>
            <person name="Watanabe S."/>
            <person name="Yosida M."/>
            <person name="Hotuta T."/>
            <person name="Kusano J."/>
            <person name="Kanehori K."/>
            <person name="Takahashi-Fujii A."/>
            <person name="Hara H."/>
            <person name="Tanase T.-O."/>
            <person name="Nomura Y."/>
            <person name="Togiya S."/>
            <person name="Komai F."/>
            <person name="Hara R."/>
            <person name="Takeuchi K."/>
            <person name="Arita M."/>
            <person name="Imose N."/>
            <person name="Musashino K."/>
            <person name="Yuuki H."/>
            <person name="Oshima A."/>
            <person name="Sasaki N."/>
            <person name="Aotsuka S."/>
            <person name="Yoshikawa Y."/>
            <person name="Matsunawa H."/>
            <person name="Ichihara T."/>
            <person name="Shiohata N."/>
            <person name="Sano S."/>
            <person name="Moriya S."/>
            <person name="Momiyama H."/>
            <person name="Satoh N."/>
            <person name="Takami S."/>
            <person name="Terashima Y."/>
            <person name="Suzuki O."/>
            <person name="Nakagawa S."/>
            <person name="Senoh A."/>
            <person name="Mizoguchi H."/>
            <person name="Goto Y."/>
            <person name="Shimizu F."/>
            <person name="Wakebe H."/>
            <person name="Hishigaki H."/>
            <person name="Watanabe T."/>
            <person name="Sugiyama A."/>
            <person name="Takemoto M."/>
            <person name="Kawakami B."/>
            <person name="Yamazaki M."/>
            <person name="Watanabe K."/>
            <person name="Kumagai A."/>
            <person name="Itakura S."/>
            <person name="Fukuzumi Y."/>
            <person name="Fujimori Y."/>
            <person name="Komiyama M."/>
            <person name="Tashiro H."/>
            <person name="Tanigami A."/>
            <person name="Fujiwara T."/>
            <person name="Ono T."/>
            <person name="Yamada K."/>
            <person name="Fujii Y."/>
            <person name="Ozaki K."/>
            <person name="Hirao M."/>
            <person name="Ohmori Y."/>
            <person name="Kawabata A."/>
            <person name="Hikiji T."/>
            <person name="Kobatake N."/>
            <person name="Inagaki H."/>
            <person name="Ikema Y."/>
            <person name="Okamoto S."/>
            <person name="Okitani R."/>
            <person name="Kawakami T."/>
            <person name="Noguchi S."/>
            <person name="Itoh T."/>
            <person name="Shigeta K."/>
            <person name="Senba T."/>
            <person name="Matsumura K."/>
            <person name="Nakajima Y."/>
            <person name="Mizuno T."/>
            <person name="Morinaga M."/>
            <person name="Sasaki M."/>
            <person name="Togashi T."/>
            <person name="Oyama M."/>
            <person name="Hata H."/>
            <person name="Watanabe M."/>
            <person name="Komatsu T."/>
            <person name="Mizushima-Sugano J."/>
            <person name="Satoh T."/>
            <person name="Shirai Y."/>
            <person name="Takahashi Y."/>
            <person name="Nakagawa K."/>
            <person name="Okumura K."/>
            <person name="Nagase T."/>
            <person name="Nomura N."/>
            <person name="Kikuchi H."/>
            <person name="Masuho Y."/>
            <person name="Yamashita R."/>
            <person name="Nakai K."/>
            <person name="Yada T."/>
            <person name="Nakamura Y."/>
            <person name="Ohara O."/>
            <person name="Isogai T."/>
            <person name="Sugano S."/>
        </authorList>
    </citation>
    <scope>NUCLEOTIDE SEQUENCE [LARGE SCALE MRNA] (ISOFORM 1)</scope>
    <source>
        <tissue>Testis</tissue>
    </source>
</reference>
<reference key="5">
    <citation type="journal article" date="2005" name="Nature">
        <title>DNA sequence and analysis of human chromosome 18.</title>
        <authorList>
            <person name="Nusbaum C."/>
            <person name="Zody M.C."/>
            <person name="Borowsky M.L."/>
            <person name="Kamal M."/>
            <person name="Kodira C.D."/>
            <person name="Taylor T.D."/>
            <person name="Whittaker C.A."/>
            <person name="Chang J.L."/>
            <person name="Cuomo C.A."/>
            <person name="Dewar K."/>
            <person name="FitzGerald M.G."/>
            <person name="Yang X."/>
            <person name="Abouelleil A."/>
            <person name="Allen N.R."/>
            <person name="Anderson S."/>
            <person name="Bloom T."/>
            <person name="Bugalter B."/>
            <person name="Butler J."/>
            <person name="Cook A."/>
            <person name="DeCaprio D."/>
            <person name="Engels R."/>
            <person name="Garber M."/>
            <person name="Gnirke A."/>
            <person name="Hafez N."/>
            <person name="Hall J.L."/>
            <person name="Norman C.H."/>
            <person name="Itoh T."/>
            <person name="Jaffe D.B."/>
            <person name="Kuroki Y."/>
            <person name="Lehoczky J."/>
            <person name="Lui A."/>
            <person name="Macdonald P."/>
            <person name="Mauceli E."/>
            <person name="Mikkelsen T.S."/>
            <person name="Naylor J.W."/>
            <person name="Nicol R."/>
            <person name="Nguyen C."/>
            <person name="Noguchi H."/>
            <person name="O'Leary S.B."/>
            <person name="Piqani B."/>
            <person name="Smith C.L."/>
            <person name="Talamas J.A."/>
            <person name="Topham K."/>
            <person name="Totoki Y."/>
            <person name="Toyoda A."/>
            <person name="Wain H.M."/>
            <person name="Young S.K."/>
            <person name="Zeng Q."/>
            <person name="Zimmer A.R."/>
            <person name="Fujiyama A."/>
            <person name="Hattori M."/>
            <person name="Birren B.W."/>
            <person name="Sakaki Y."/>
            <person name="Lander E.S."/>
        </authorList>
    </citation>
    <scope>NUCLEOTIDE SEQUENCE [LARGE SCALE GENOMIC DNA]</scope>
</reference>
<reference key="6">
    <citation type="journal article" date="2004" name="Genome Res.">
        <title>The status, quality, and expansion of the NIH full-length cDNA project: the Mammalian Gene Collection (MGC).</title>
        <authorList>
            <consortium name="The MGC Project Team"/>
        </authorList>
    </citation>
    <scope>NUCLEOTIDE SEQUENCE [LARGE SCALE MRNA] (ISOFORM 1)</scope>
    <source>
        <tissue>Lung</tissue>
    </source>
</reference>
<reference key="7">
    <citation type="journal article" date="2017" name="Am. J. Hum. Genet.">
        <title>Mutations in EXTL3 cause neuro-immuno-skeletal dysplasia syndrome.</title>
        <authorList>
            <person name="Oud M.M."/>
            <person name="Tuijnenburg P."/>
            <person name="Hempel M."/>
            <person name="van Vlies N."/>
            <person name="Ren Z."/>
            <person name="Ferdinandusse S."/>
            <person name="Jansen M.H."/>
            <person name="Santer R."/>
            <person name="Johannsen J."/>
            <person name="Bacchelli C."/>
            <person name="Alders M."/>
            <person name="Li R."/>
            <person name="Davies R."/>
            <person name="Dupuis L."/>
            <person name="Cale C.M."/>
            <person name="Wanders R.J."/>
            <person name="Pals S.T."/>
            <person name="Ocaka L."/>
            <person name="James C."/>
            <person name="Mueller I."/>
            <person name="Lehmberg K."/>
            <person name="Strom T."/>
            <person name="Engels H."/>
            <person name="Williams H.J."/>
            <person name="Beales P."/>
            <person name="Roepman R."/>
            <person name="Dias P."/>
            <person name="Brunner H.G."/>
            <person name="Cobben J.M."/>
            <person name="Hall C."/>
            <person name="Hartley T."/>
            <person name="Le Quesne Stabej P."/>
            <person name="Mendoza-Londono R."/>
            <person name="Davies E.G."/>
            <person name="de Sousa S.B."/>
            <person name="Lessel D."/>
            <person name="Arts H.H."/>
            <person name="Kuijpers T.W."/>
        </authorList>
    </citation>
    <scope>VARIANT SER-378</scope>
</reference>
<accession>Q7L1S5</accession>
<accession>Q6UX69</accession>
<accession>Q9BXH3</accession>
<accession>Q9BXH4</accession>
<accession>Q9BZW9</accession>